<proteinExistence type="inferred from homology"/>
<reference key="1">
    <citation type="journal article" date="2005" name="J. Infect. Dis.">
        <title>Genome sequence of a serotype M28 strain of group A Streptococcus: potential new insights into puerperal sepsis and bacterial disease specificity.</title>
        <authorList>
            <person name="Green N.M."/>
            <person name="Zhang S."/>
            <person name="Porcella S.F."/>
            <person name="Nagiec M.J."/>
            <person name="Barbian K.D."/>
            <person name="Beres S.B."/>
            <person name="Lefebvre R.B."/>
            <person name="Musser J.M."/>
        </authorList>
    </citation>
    <scope>NUCLEOTIDE SEQUENCE [LARGE SCALE GENOMIC DNA]</scope>
    <source>
        <strain>MGAS6180</strain>
    </source>
</reference>
<name>LACG_STRPM</name>
<dbReference type="EC" id="3.2.1.85" evidence="1"/>
<dbReference type="EMBL" id="CP000056">
    <property type="protein sequence ID" value="AAX72732.1"/>
    <property type="molecule type" value="Genomic_DNA"/>
</dbReference>
<dbReference type="RefSeq" id="WP_011285166.1">
    <property type="nucleotide sequence ID" value="NC_007296.2"/>
</dbReference>
<dbReference type="SMR" id="Q48RC8"/>
<dbReference type="CAZy" id="GH1">
    <property type="family name" value="Glycoside Hydrolase Family 1"/>
</dbReference>
<dbReference type="KEGG" id="spb:M28_Spy1622"/>
<dbReference type="HOGENOM" id="CLU_001859_1_3_9"/>
<dbReference type="UniPathway" id="UPA00542">
    <property type="reaction ID" value="UER00605"/>
</dbReference>
<dbReference type="GO" id="GO:0005829">
    <property type="term" value="C:cytosol"/>
    <property type="evidence" value="ECO:0007669"/>
    <property type="project" value="TreeGrafter"/>
</dbReference>
<dbReference type="GO" id="GO:0033920">
    <property type="term" value="F:6-phospho-beta-galactosidase activity"/>
    <property type="evidence" value="ECO:0007669"/>
    <property type="project" value="UniProtKB-UniRule"/>
</dbReference>
<dbReference type="GO" id="GO:0008422">
    <property type="term" value="F:beta-glucosidase activity"/>
    <property type="evidence" value="ECO:0007669"/>
    <property type="project" value="TreeGrafter"/>
</dbReference>
<dbReference type="GO" id="GO:0019512">
    <property type="term" value="P:lactose catabolic process via tagatose-6-phosphate"/>
    <property type="evidence" value="ECO:0007669"/>
    <property type="project" value="InterPro"/>
</dbReference>
<dbReference type="FunFam" id="3.20.20.80:FF:000004">
    <property type="entry name" value="Beta-glucosidase 6-phospho-beta-glucosidase"/>
    <property type="match status" value="1"/>
</dbReference>
<dbReference type="Gene3D" id="3.20.20.80">
    <property type="entry name" value="Glycosidases"/>
    <property type="match status" value="1"/>
</dbReference>
<dbReference type="HAMAP" id="MF_01574">
    <property type="entry name" value="LacG"/>
    <property type="match status" value="1"/>
</dbReference>
<dbReference type="InterPro" id="IPR005928">
    <property type="entry name" value="6P-beta-galactosidase"/>
</dbReference>
<dbReference type="InterPro" id="IPR001360">
    <property type="entry name" value="Glyco_hydro_1"/>
</dbReference>
<dbReference type="InterPro" id="IPR018120">
    <property type="entry name" value="Glyco_hydro_1_AS"/>
</dbReference>
<dbReference type="InterPro" id="IPR033132">
    <property type="entry name" value="Glyco_hydro_1_N_CS"/>
</dbReference>
<dbReference type="InterPro" id="IPR017853">
    <property type="entry name" value="Glycoside_hydrolase_SF"/>
</dbReference>
<dbReference type="NCBIfam" id="TIGR01233">
    <property type="entry name" value="lacG"/>
    <property type="match status" value="1"/>
</dbReference>
<dbReference type="NCBIfam" id="NF010036">
    <property type="entry name" value="PRK13511.1"/>
    <property type="match status" value="1"/>
</dbReference>
<dbReference type="PANTHER" id="PTHR10353">
    <property type="entry name" value="GLYCOSYL HYDROLASE"/>
    <property type="match status" value="1"/>
</dbReference>
<dbReference type="PANTHER" id="PTHR10353:SF36">
    <property type="entry name" value="LP05116P"/>
    <property type="match status" value="1"/>
</dbReference>
<dbReference type="Pfam" id="PF00232">
    <property type="entry name" value="Glyco_hydro_1"/>
    <property type="match status" value="1"/>
</dbReference>
<dbReference type="PRINTS" id="PR00131">
    <property type="entry name" value="GLHYDRLASE1"/>
</dbReference>
<dbReference type="SUPFAM" id="SSF51445">
    <property type="entry name" value="(Trans)glycosidases"/>
    <property type="match status" value="1"/>
</dbReference>
<dbReference type="PROSITE" id="PS00572">
    <property type="entry name" value="GLYCOSYL_HYDROL_F1_1"/>
    <property type="match status" value="1"/>
</dbReference>
<dbReference type="PROSITE" id="PS00653">
    <property type="entry name" value="GLYCOSYL_HYDROL_F1_2"/>
    <property type="match status" value="1"/>
</dbReference>
<feature type="chain" id="PRO_0000260739" description="6-phospho-beta-galactosidase">
    <location>
        <begin position="1"/>
        <end position="468"/>
    </location>
</feature>
<feature type="active site" description="Proton donor" evidence="1">
    <location>
        <position position="160"/>
    </location>
</feature>
<feature type="active site" description="Nucleophile" evidence="1">
    <location>
        <position position="375"/>
    </location>
</feature>
<feature type="binding site" evidence="1">
    <location>
        <position position="19"/>
    </location>
    <ligand>
        <name>D-galactose 6-phosphate</name>
        <dbReference type="ChEBI" id="CHEBI:91004"/>
    </ligand>
</feature>
<feature type="binding site" evidence="1">
    <location>
        <position position="116"/>
    </location>
    <ligand>
        <name>D-galactose 6-phosphate</name>
        <dbReference type="ChEBI" id="CHEBI:91004"/>
    </ligand>
</feature>
<feature type="binding site" evidence="1">
    <location>
        <position position="159"/>
    </location>
    <ligand>
        <name>D-galactose 6-phosphate</name>
        <dbReference type="ChEBI" id="CHEBI:91004"/>
    </ligand>
</feature>
<feature type="binding site" evidence="1">
    <location>
        <position position="160"/>
    </location>
    <ligand>
        <name>D-galactose 6-phosphate</name>
        <dbReference type="ChEBI" id="CHEBI:91004"/>
    </ligand>
</feature>
<feature type="binding site" evidence="1">
    <location>
        <position position="297"/>
    </location>
    <ligand>
        <name>D-galactose 6-phosphate</name>
        <dbReference type="ChEBI" id="CHEBI:91004"/>
    </ligand>
</feature>
<feature type="binding site" evidence="1">
    <location>
        <position position="428"/>
    </location>
    <ligand>
        <name>D-galactose 6-phosphate</name>
        <dbReference type="ChEBI" id="CHEBI:91004"/>
    </ligand>
</feature>
<feature type="binding site" evidence="1">
    <location>
        <position position="429"/>
    </location>
    <ligand>
        <name>D-galactose 6-phosphate</name>
        <dbReference type="ChEBI" id="CHEBI:91004"/>
    </ligand>
</feature>
<feature type="binding site" evidence="1">
    <location>
        <position position="435"/>
    </location>
    <ligand>
        <name>D-galactose 6-phosphate</name>
        <dbReference type="ChEBI" id="CHEBI:91004"/>
    </ligand>
</feature>
<feature type="binding site" evidence="1">
    <location>
        <position position="437"/>
    </location>
    <ligand>
        <name>D-galactose 6-phosphate</name>
        <dbReference type="ChEBI" id="CHEBI:91004"/>
    </ligand>
</feature>
<sequence length="468" mass="53846">MTKTLPKDFIFGGATAAYQAEGATHTDGKGPVAWDKYLEDNYWYTAEPASDFYNRYPVDLKLSEEFGVNGIRISIAWSRIFPTGKGEVNPKGVEYYHNLFAECHKRHVEPFVTLHHFDTPEALHSDGDFLNRENIEHFVNYAEFCFKEFSEVNYWTTFNEIGPIGDGQYLVGKFPPGIQYDLAKVFQSHHNMMVSHARAVKLFKDSGYSGEIGVVHALPTKYPFDANNPDDVRAAELEDIIHNKFILDATYLGKYSDKTMEGVNHILEVNGGELDLREEDFAALDAAKDLNDFLGINYYMSDWMQAFDGETEIIHNGKGEKGSSKYQIKGVGRRKAPVDVPKTDWDWIIFPQGLYDQIMRVKADYPNYKKIYITENGLGYKDEFVDNTVYDDGRIDYVKKHLEVISDAISDGANVKGYFMWSLMDVFSWSNGYEKRYGLFYVDFETQERYPKKSAYWYKKVAETQVIE</sequence>
<keyword id="KW-0326">Glycosidase</keyword>
<keyword id="KW-0378">Hydrolase</keyword>
<organism>
    <name type="scientific">Streptococcus pyogenes serotype M28 (strain MGAS6180)</name>
    <dbReference type="NCBI Taxonomy" id="319701"/>
    <lineage>
        <taxon>Bacteria</taxon>
        <taxon>Bacillati</taxon>
        <taxon>Bacillota</taxon>
        <taxon>Bacilli</taxon>
        <taxon>Lactobacillales</taxon>
        <taxon>Streptococcaceae</taxon>
        <taxon>Streptococcus</taxon>
    </lineage>
</organism>
<accession>Q48RC8</accession>
<evidence type="ECO:0000255" key="1">
    <source>
        <dbReference type="HAMAP-Rule" id="MF_01574"/>
    </source>
</evidence>
<gene>
    <name evidence="1" type="primary">lacG</name>
    <name type="ordered locus">M28_Spy1622</name>
</gene>
<comment type="catalytic activity">
    <reaction evidence="1">
        <text>a 6-phospho-beta-D-galactoside + H2O = D-galactose 6-phosphate + an alcohol</text>
        <dbReference type="Rhea" id="RHEA:24568"/>
        <dbReference type="ChEBI" id="CHEBI:15377"/>
        <dbReference type="ChEBI" id="CHEBI:30879"/>
        <dbReference type="ChEBI" id="CHEBI:58534"/>
        <dbReference type="ChEBI" id="CHEBI:91004"/>
        <dbReference type="EC" id="3.2.1.85"/>
    </reaction>
</comment>
<comment type="pathway">
    <text evidence="1">Carbohydrate metabolism; lactose degradation; D-galactose 6-phosphate and beta-D-glucose from lactose 6-phosphate: step 1/1.</text>
</comment>
<comment type="similarity">
    <text evidence="1">Belongs to the glycosyl hydrolase 1 family.</text>
</comment>
<protein>
    <recommendedName>
        <fullName evidence="1">6-phospho-beta-galactosidase</fullName>
        <ecNumber evidence="1">3.2.1.85</ecNumber>
    </recommendedName>
    <alternativeName>
        <fullName evidence="1">Beta-D-phosphogalactoside galactohydrolase</fullName>
        <shortName evidence="1">PGALase</shortName>
    </alternativeName>
    <alternativeName>
        <fullName evidence="1">P-beta-Gal</fullName>
        <shortName evidence="1">PBG</shortName>
    </alternativeName>
</protein>